<keyword id="KW-0025">Alternative splicing</keyword>
<keyword id="KW-0963">Cytoplasm</keyword>
<keyword id="KW-0343">GTPase activation</keyword>
<keyword id="KW-0458">Lysosome</keyword>
<keyword id="KW-0472">Membrane</keyword>
<keyword id="KW-0597">Phosphoprotein</keyword>
<keyword id="KW-1185">Reference proteome</keyword>
<keyword id="KW-0043">Tumor suppressor</keyword>
<keyword id="KW-0832">Ubl conjugation</keyword>
<gene>
    <name evidence="9 11" type="primary">Tsc2</name>
</gene>
<name>TSC2_MOUSE</name>
<feature type="chain" id="PRO_0000065655" description="Tuberin">
    <location>
        <begin position="1"/>
        <end position="1814"/>
    </location>
</feature>
<feature type="domain" description="Rap-GAP" evidence="3">
    <location>
        <begin position="1532"/>
        <end position="1766"/>
    </location>
</feature>
<feature type="region of interest" description="Disordered" evidence="4">
    <location>
        <begin position="1078"/>
        <end position="1174"/>
    </location>
</feature>
<feature type="region of interest" description="Disordered" evidence="4">
    <location>
        <begin position="1325"/>
        <end position="1356"/>
    </location>
</feature>
<feature type="region of interest" description="Disordered" evidence="4">
    <location>
        <begin position="1428"/>
        <end position="1490"/>
    </location>
</feature>
<feature type="region of interest" description="Disordered" evidence="4">
    <location>
        <begin position="1772"/>
        <end position="1798"/>
    </location>
</feature>
<feature type="compositionally biased region" description="Low complexity" evidence="4">
    <location>
        <begin position="1078"/>
        <end position="1097"/>
    </location>
</feature>
<feature type="compositionally biased region" description="Low complexity" evidence="4">
    <location>
        <begin position="1448"/>
        <end position="1463"/>
    </location>
</feature>
<feature type="modified residue" description="Phosphoserine" evidence="1">
    <location>
        <position position="540"/>
    </location>
</feature>
<feature type="modified residue" description="Phosphoserine" evidence="1">
    <location>
        <position position="664"/>
    </location>
</feature>
<feature type="modified residue" description="Phosphothreonine" evidence="1">
    <location>
        <position position="927"/>
    </location>
</feature>
<feature type="modified residue" description="Phosphoserine; by PKB/AKT1" evidence="7">
    <location>
        <position position="939"/>
    </location>
</feature>
<feature type="modified residue" description="Phosphoserine" evidence="7">
    <location>
        <position position="981"/>
    </location>
</feature>
<feature type="modified residue" description="Phosphoserine" evidence="7">
    <location>
        <position position="1130"/>
    </location>
</feature>
<feature type="modified residue" description="Phosphoserine" evidence="7 12">
    <location>
        <position position="1132"/>
    </location>
</feature>
<feature type="modified residue" description="Phosphoserine" evidence="1">
    <location>
        <position position="1155"/>
    </location>
</feature>
<feature type="modified residue" description="Phosphothreonine" evidence="1">
    <location>
        <position position="1270"/>
    </location>
</feature>
<feature type="modified residue" description="Phosphoserine" evidence="1">
    <location>
        <position position="1339"/>
    </location>
</feature>
<feature type="modified residue" description="Phosphoserine" evidence="1">
    <location>
        <position position="1340"/>
    </location>
</feature>
<feature type="modified residue" description="Phosphoserine" evidence="1">
    <location>
        <position position="1348"/>
    </location>
</feature>
<feature type="modified residue" description="Phosphoserine" evidence="1">
    <location>
        <position position="1365"/>
    </location>
</feature>
<feature type="modified residue" description="Phosphoserine" evidence="1">
    <location>
        <position position="1388"/>
    </location>
</feature>
<feature type="modified residue" description="Phosphoserine" evidence="1">
    <location>
        <position position="1412"/>
    </location>
</feature>
<feature type="modified residue" description="Phosphoserine" evidence="1">
    <location>
        <position position="1419"/>
    </location>
</feature>
<feature type="modified residue" description="Phosphoserine" evidence="1">
    <location>
        <position position="1421"/>
    </location>
</feature>
<feature type="modified residue" description="Phosphoserine" evidence="1">
    <location>
        <position position="1455"/>
    </location>
</feature>
<feature type="modified residue" description="Phosphothreonine; by PKB/AKT1" evidence="7">
    <location>
        <position position="1465"/>
    </location>
</feature>
<feature type="modified residue" description="Phosphoserine" evidence="12">
    <location>
        <position position="1772"/>
    </location>
</feature>
<feature type="modified residue" description="Phosphoserine; by RPS6KA1" evidence="1">
    <location>
        <position position="1805"/>
    </location>
</feature>
<feature type="modified residue" description="Phosphoserine" evidence="1">
    <location>
        <position position="1806"/>
    </location>
</feature>
<feature type="splice variant" id="VSP_004473" description="In isoform A." evidence="10">
    <location>
        <begin position="79"/>
        <end position="115"/>
    </location>
</feature>
<feature type="splice variant" id="VSP_004474" description="In isoform B." evidence="10">
    <location>
        <begin position="534"/>
        <end position="572"/>
    </location>
</feature>
<feature type="splice variant" id="VSP_004476" description="In isoform C." evidence="10">
    <location>
        <begin position="947"/>
        <end position="990"/>
    </location>
</feature>
<feature type="splice variant" id="VSP_004475" description="In isoform F." evidence="10">
    <location>
        <begin position="947"/>
        <end position="989"/>
    </location>
</feature>
<feature type="splice variant" id="VSP_004477" description="In isoform E and isoform F." evidence="10">
    <original>GHAPVQVIVSATGC</original>
    <variation>RDTALYKSLSVPAAG</variation>
    <location>
        <begin position="1245"/>
        <end position="1258"/>
    </location>
</feature>
<feature type="splice variant" id="VSP_004478" description="In isoform D, isoform E and isoform F." evidence="10">
    <location>
        <begin position="1271"/>
        <end position="1293"/>
    </location>
</feature>
<feature type="splice variant" id="VSP_004479" description="In isoform E and isoform F." evidence="10">
    <original>GPACKCEWWRQPGEIVVWALPVVMELTVTILLCHLQ</original>
    <variation>MEGLVDTSVAKIVSDRNLSFVARQMALHAN</variation>
    <location>
        <begin position="1693"/>
        <end position="1728"/>
    </location>
</feature>
<feature type="splice variant" id="VSP_004480" description="In isoform F." evidence="10">
    <location>
        <begin position="1776"/>
        <end position="1814"/>
    </location>
</feature>
<feature type="mutagenesis site" description="In TSC2-5A; abolished phosphorylation by PKB/AKT1, leading to constitutive localization to lysosomal membranes; when associated with A-981, 1130-A--A-1132 and A-1465." evidence="7">
    <original>S</original>
    <variation>A</variation>
    <location>
        <position position="939"/>
    </location>
</feature>
<feature type="mutagenesis site" description="In TSC2-5A; abolished phosphorylation by PKB/AKT1, leading to constitutive localization to lysosomal membranes; when associated with A-939, 1130-A--A-1132 and A-1465." evidence="7">
    <original>S</original>
    <variation>A</variation>
    <location>
        <position position="981"/>
    </location>
</feature>
<feature type="mutagenesis site" description="In TSC2-5A; abolished phosphorylation by PKB/AKT1, leading to constitutive localization to lysosomal membranes; when associated with A-939, A-981 and A-1465." evidence="7">
    <original>SMS</original>
    <variation>AMA</variation>
    <location>
        <begin position="1130"/>
        <end position="1132"/>
    </location>
</feature>
<feature type="mutagenesis site" description="In TSC2-5A; abolished phosphorylation by PKB/AKT1, leading to constitutive localization to lysosomal membranes; when associated with A-939, A-981 and 1130-A--A-1132." evidence="7">
    <original>T</original>
    <variation>A</variation>
    <location>
        <position position="1465"/>
    </location>
</feature>
<feature type="sequence conflict" description="In Ref. 2; AAA86902/AAA86901." evidence="10" ref="2">
    <location>
        <position position="161"/>
    </location>
</feature>
<feature type="sequence conflict" description="In Ref. 2; AAA86902/AAA86901." evidence="10" ref="2">
    <original>G</original>
    <variation>S</variation>
    <location>
        <position position="269"/>
    </location>
</feature>
<feature type="sequence conflict" description="In Ref. 2; AAA86902/AAA86901." evidence="10" ref="2">
    <original>A</original>
    <variation>R</variation>
    <location>
        <position position="462"/>
    </location>
</feature>
<feature type="sequence conflict" description="In Ref. 2; AAA86902/AAA86901." evidence="10" ref="2">
    <original>I</original>
    <variation>N</variation>
    <location>
        <position position="476"/>
    </location>
</feature>
<feature type="sequence conflict" description="In Ref. 2; AAA86902/AAA86901." evidence="10" ref="2">
    <original>D</original>
    <variation>N</variation>
    <location>
        <position position="549"/>
    </location>
</feature>
<feature type="sequence conflict" description="In Ref. 4; AAD27867." evidence="10" ref="4">
    <original>K</original>
    <variation>N</variation>
    <location>
        <position position="707"/>
    </location>
</feature>
<feature type="sequence conflict" description="In Ref. 2; AAA86902/AAA86901." evidence="10" ref="2">
    <original>VP</original>
    <variation>AA</variation>
    <location>
        <begin position="861"/>
        <end position="862"/>
    </location>
</feature>
<feature type="sequence conflict" description="In Ref. 2; AAA86902/AAA86901." evidence="10" ref="2">
    <original>R</original>
    <variation>P</variation>
    <location>
        <position position="1127"/>
    </location>
</feature>
<feature type="sequence conflict" description="In Ref. 2; AAA86902/AAA86901." evidence="10" ref="2">
    <location>
        <position position="1665"/>
    </location>
</feature>
<dbReference type="EMBL" id="U37775">
    <property type="protein sequence ID" value="AAA86902.1"/>
    <property type="molecule type" value="mRNA"/>
</dbReference>
<dbReference type="EMBL" id="U37775">
    <property type="protein sequence ID" value="AAA86901.1"/>
    <property type="molecule type" value="mRNA"/>
</dbReference>
<dbReference type="EMBL" id="U39818">
    <property type="protein sequence ID" value="AAB18754.1"/>
    <property type="molecule type" value="mRNA"/>
</dbReference>
<dbReference type="EMBL" id="AB009371">
    <property type="protein sequence ID" value="BAA28845.1"/>
    <property type="molecule type" value="Genomic_DNA"/>
</dbReference>
<dbReference type="EMBL" id="AF132986">
    <property type="protein sequence ID" value="AAD27867.1"/>
    <property type="molecule type" value="mRNA"/>
</dbReference>
<dbReference type="SMR" id="Q61037"/>
<dbReference type="FunCoup" id="Q61037">
    <property type="interactions" value="1373"/>
</dbReference>
<dbReference type="IntAct" id="Q61037">
    <property type="interactions" value="20"/>
</dbReference>
<dbReference type="MINT" id="Q61037"/>
<dbReference type="STRING" id="10090.ENSMUSP00000094986"/>
<dbReference type="GlyGen" id="Q61037">
    <property type="glycosylation" value="2 sites, 1 N-linked glycan (1 site)"/>
</dbReference>
<dbReference type="iPTMnet" id="Q61037"/>
<dbReference type="PhosphoSitePlus" id="Q61037"/>
<dbReference type="jPOST" id="Q61037"/>
<dbReference type="PaxDb" id="10090-ENSMUSP00000094986"/>
<dbReference type="PeptideAtlas" id="Q61037"/>
<dbReference type="ProteomicsDB" id="300036">
    <molecule id="Q61037-1"/>
</dbReference>
<dbReference type="ProteomicsDB" id="300037">
    <molecule id="Q61037-2"/>
</dbReference>
<dbReference type="ProteomicsDB" id="300038">
    <molecule id="Q61037-3"/>
</dbReference>
<dbReference type="ProteomicsDB" id="300039">
    <molecule id="Q61037-4"/>
</dbReference>
<dbReference type="ProteomicsDB" id="300040">
    <molecule id="Q61037-5"/>
</dbReference>
<dbReference type="ProteomicsDB" id="300041">
    <molecule id="Q61037-6"/>
</dbReference>
<dbReference type="ProteomicsDB" id="300042">
    <molecule id="Q61037-7"/>
</dbReference>
<dbReference type="Pumba" id="Q61037"/>
<dbReference type="AGR" id="MGI:102548"/>
<dbReference type="MGI" id="MGI:102548">
    <property type="gene designation" value="Tsc2"/>
</dbReference>
<dbReference type="eggNOG" id="KOG3687">
    <property type="taxonomic scope" value="Eukaryota"/>
</dbReference>
<dbReference type="InParanoid" id="Q61037"/>
<dbReference type="PhylomeDB" id="Q61037"/>
<dbReference type="Reactome" id="R-MMU-1632852">
    <property type="pathway name" value="Macroautophagy"/>
</dbReference>
<dbReference type="Reactome" id="R-MMU-165181">
    <property type="pathway name" value="Inhibition of TSC complex formation by PKB"/>
</dbReference>
<dbReference type="Reactome" id="R-MMU-198323">
    <property type="pathway name" value="AKT phosphorylates targets in the cytosol"/>
</dbReference>
<dbReference type="Reactome" id="R-MMU-380972">
    <property type="pathway name" value="Energy dependent regulation of mTOR by LKB1-AMPK"/>
</dbReference>
<dbReference type="Reactome" id="R-MMU-5628897">
    <property type="pathway name" value="TP53 Regulates Metabolic Genes"/>
</dbReference>
<dbReference type="Reactome" id="R-MMU-8854214">
    <property type="pathway name" value="TBC/RABGAPs"/>
</dbReference>
<dbReference type="ChiTaRS" id="Tsc2">
    <property type="organism name" value="mouse"/>
</dbReference>
<dbReference type="PRO" id="PR:Q61037"/>
<dbReference type="Proteomes" id="UP000000589">
    <property type="component" value="Unplaced"/>
</dbReference>
<dbReference type="RNAct" id="Q61037">
    <property type="molecule type" value="protein"/>
</dbReference>
<dbReference type="GO" id="GO:0005737">
    <property type="term" value="C:cytoplasm"/>
    <property type="evidence" value="ECO:0000314"/>
    <property type="project" value="MGI"/>
</dbReference>
<dbReference type="GO" id="GO:0005765">
    <property type="term" value="C:lysosomal membrane"/>
    <property type="evidence" value="ECO:0000314"/>
    <property type="project" value="UniProtKB"/>
</dbReference>
<dbReference type="GO" id="GO:0005634">
    <property type="term" value="C:nucleus"/>
    <property type="evidence" value="ECO:0007669"/>
    <property type="project" value="InterPro"/>
</dbReference>
<dbReference type="GO" id="GO:0045202">
    <property type="term" value="C:synapse"/>
    <property type="evidence" value="ECO:0000314"/>
    <property type="project" value="SynGO"/>
</dbReference>
<dbReference type="GO" id="GO:0033596">
    <property type="term" value="C:TSC1-TSC2 complex"/>
    <property type="evidence" value="ECO:0000314"/>
    <property type="project" value="UniProtKB"/>
</dbReference>
<dbReference type="GO" id="GO:0071889">
    <property type="term" value="F:14-3-3 protein binding"/>
    <property type="evidence" value="ECO:0000314"/>
    <property type="project" value="MGI"/>
</dbReference>
<dbReference type="GO" id="GO:0005096">
    <property type="term" value="F:GTPase activator activity"/>
    <property type="evidence" value="ECO:0000314"/>
    <property type="project" value="UniProtKB"/>
</dbReference>
<dbReference type="GO" id="GO:0019902">
    <property type="term" value="F:phosphatase binding"/>
    <property type="evidence" value="ECO:0000250"/>
    <property type="project" value="UniProtKB"/>
</dbReference>
<dbReference type="GO" id="GO:0043276">
    <property type="term" value="P:anoikis"/>
    <property type="evidence" value="ECO:0000315"/>
    <property type="project" value="ParkinsonsUK-UCL"/>
</dbReference>
<dbReference type="GO" id="GO:0042100">
    <property type="term" value="P:B cell proliferation"/>
    <property type="evidence" value="ECO:0000316"/>
    <property type="project" value="MGI"/>
</dbReference>
<dbReference type="GO" id="GO:0008283">
    <property type="term" value="P:cell population proliferation"/>
    <property type="evidence" value="ECO:0000315"/>
    <property type="project" value="MGI"/>
</dbReference>
<dbReference type="GO" id="GO:0030030">
    <property type="term" value="P:cell projection organization"/>
    <property type="evidence" value="ECO:0000266"/>
    <property type="project" value="MGI"/>
</dbReference>
<dbReference type="GO" id="GO:0032869">
    <property type="term" value="P:cellular response to insulin stimulus"/>
    <property type="evidence" value="ECO:0000315"/>
    <property type="project" value="MGI"/>
</dbReference>
<dbReference type="GO" id="GO:0009267">
    <property type="term" value="P:cellular response to starvation"/>
    <property type="evidence" value="ECO:0000314"/>
    <property type="project" value="UniProtKB"/>
</dbReference>
<dbReference type="GO" id="GO:0046323">
    <property type="term" value="P:D-glucose import"/>
    <property type="evidence" value="ECO:0000315"/>
    <property type="project" value="MGI"/>
</dbReference>
<dbReference type="GO" id="GO:0098976">
    <property type="term" value="P:excitatory chemical synaptic transmission"/>
    <property type="evidence" value="ECO:0000315"/>
    <property type="project" value="MGI"/>
</dbReference>
<dbReference type="GO" id="GO:0007507">
    <property type="term" value="P:heart development"/>
    <property type="evidence" value="ECO:0000315"/>
    <property type="project" value="MGI"/>
</dbReference>
<dbReference type="GO" id="GO:0098977">
    <property type="term" value="P:inhibitory chemical synaptic transmission"/>
    <property type="evidence" value="ECO:0000315"/>
    <property type="project" value="MGI"/>
</dbReference>
<dbReference type="GO" id="GO:0030889">
    <property type="term" value="P:negative regulation of B cell proliferation"/>
    <property type="evidence" value="ECO:0000316"/>
    <property type="project" value="MGI"/>
</dbReference>
<dbReference type="GO" id="GO:0008285">
    <property type="term" value="P:negative regulation of cell population proliferation"/>
    <property type="evidence" value="ECO:0000315"/>
    <property type="project" value="MGI"/>
</dbReference>
<dbReference type="GO" id="GO:0045792">
    <property type="term" value="P:negative regulation of cell size"/>
    <property type="evidence" value="ECO:0000266"/>
    <property type="project" value="MGI"/>
</dbReference>
<dbReference type="GO" id="GO:0051898">
    <property type="term" value="P:negative regulation of phosphatidylinositol 3-kinase/protein kinase B signal transduction"/>
    <property type="evidence" value="ECO:0000315"/>
    <property type="project" value="MGI"/>
</dbReference>
<dbReference type="GO" id="GO:0042130">
    <property type="term" value="P:negative regulation of T cell proliferation"/>
    <property type="evidence" value="ECO:0000316"/>
    <property type="project" value="MGI"/>
</dbReference>
<dbReference type="GO" id="GO:0032007">
    <property type="term" value="P:negative regulation of TOR signaling"/>
    <property type="evidence" value="ECO:0000315"/>
    <property type="project" value="MGI"/>
</dbReference>
<dbReference type="GO" id="GO:1904262">
    <property type="term" value="P:negative regulation of TORC1 signaling"/>
    <property type="evidence" value="ECO:0000314"/>
    <property type="project" value="UniProtKB"/>
</dbReference>
<dbReference type="GO" id="GO:0001843">
    <property type="term" value="P:neural tube closure"/>
    <property type="evidence" value="ECO:0000315"/>
    <property type="project" value="MGI"/>
</dbReference>
<dbReference type="GO" id="GO:0050918">
    <property type="term" value="P:positive chemotaxis"/>
    <property type="evidence" value="ECO:0000315"/>
    <property type="project" value="MGI"/>
</dbReference>
<dbReference type="GO" id="GO:0010508">
    <property type="term" value="P:positive regulation of autophagy"/>
    <property type="evidence" value="ECO:0000315"/>
    <property type="project" value="ParkinsonsUK-UCL"/>
</dbReference>
<dbReference type="GO" id="GO:0046628">
    <property type="term" value="P:positive regulation of insulin receptor signaling pathway"/>
    <property type="evidence" value="ECO:0000315"/>
    <property type="project" value="MGI"/>
</dbReference>
<dbReference type="GO" id="GO:0016239">
    <property type="term" value="P:positive regulation of macroautophagy"/>
    <property type="evidence" value="ECO:0000315"/>
    <property type="project" value="ParkinsonsUK-UCL"/>
</dbReference>
<dbReference type="GO" id="GO:0045944">
    <property type="term" value="P:positive regulation of transcription by RNA polymerase II"/>
    <property type="evidence" value="ECO:0000315"/>
    <property type="project" value="MGI"/>
</dbReference>
<dbReference type="GO" id="GO:0006606">
    <property type="term" value="P:protein import into nucleus"/>
    <property type="evidence" value="ECO:0000315"/>
    <property type="project" value="MGI"/>
</dbReference>
<dbReference type="GO" id="GO:0008104">
    <property type="term" value="P:protein localization"/>
    <property type="evidence" value="ECO:0000314"/>
    <property type="project" value="MGI"/>
</dbReference>
<dbReference type="GO" id="GO:0044861">
    <property type="term" value="P:protein transport into plasma membrane raft"/>
    <property type="evidence" value="ECO:0000315"/>
    <property type="project" value="MGI"/>
</dbReference>
<dbReference type="GO" id="GO:0030100">
    <property type="term" value="P:regulation of endocytosis"/>
    <property type="evidence" value="ECO:0000315"/>
    <property type="project" value="MGI"/>
</dbReference>
<dbReference type="GO" id="GO:0046626">
    <property type="term" value="P:regulation of insulin receptor signaling pathway"/>
    <property type="evidence" value="ECO:0000315"/>
    <property type="project" value="MGI"/>
</dbReference>
<dbReference type="GO" id="GO:0051056">
    <property type="term" value="P:regulation of small GTPase mediated signal transduction"/>
    <property type="evidence" value="ECO:0007669"/>
    <property type="project" value="InterPro"/>
</dbReference>
<dbReference type="GO" id="GO:0001666">
    <property type="term" value="P:response to hypoxia"/>
    <property type="evidence" value="ECO:0000315"/>
    <property type="project" value="MGI"/>
</dbReference>
<dbReference type="GO" id="GO:0042098">
    <property type="term" value="P:T cell proliferation"/>
    <property type="evidence" value="ECO:0000316"/>
    <property type="project" value="MGI"/>
</dbReference>
<dbReference type="GO" id="GO:0006366">
    <property type="term" value="P:transcription by RNA polymerase II"/>
    <property type="evidence" value="ECO:0000315"/>
    <property type="project" value="MGI"/>
</dbReference>
<dbReference type="FunFam" id="3.40.50.11210:FF:000004">
    <property type="entry name" value="Tuberin isoform X3"/>
    <property type="match status" value="1"/>
</dbReference>
<dbReference type="Gene3D" id="3.40.50.11210">
    <property type="entry name" value="Rap/Ran-GAP"/>
    <property type="match status" value="1"/>
</dbReference>
<dbReference type="InterPro" id="IPR016024">
    <property type="entry name" value="ARM-type_fold"/>
</dbReference>
<dbReference type="InterPro" id="IPR035974">
    <property type="entry name" value="Rap/Ran-GAP_sf"/>
</dbReference>
<dbReference type="InterPro" id="IPR000331">
    <property type="entry name" value="Rap/Ran_GAP_dom"/>
</dbReference>
<dbReference type="InterPro" id="IPR003913">
    <property type="entry name" value="Tuberin"/>
</dbReference>
<dbReference type="InterPro" id="IPR018515">
    <property type="entry name" value="Tuberin-type_domain"/>
</dbReference>
<dbReference type="InterPro" id="IPR027107">
    <property type="entry name" value="Tuberin/Ral-act_asu"/>
</dbReference>
<dbReference type="InterPro" id="IPR024584">
    <property type="entry name" value="Tuberin_N"/>
</dbReference>
<dbReference type="PANTHER" id="PTHR10063">
    <property type="entry name" value="TUBERIN"/>
    <property type="match status" value="1"/>
</dbReference>
<dbReference type="PANTHER" id="PTHR10063:SF0">
    <property type="entry name" value="TUBERIN"/>
    <property type="match status" value="1"/>
</dbReference>
<dbReference type="Pfam" id="PF11864">
    <property type="entry name" value="DUF3384"/>
    <property type="match status" value="1"/>
</dbReference>
<dbReference type="Pfam" id="PF02145">
    <property type="entry name" value="Rap_GAP"/>
    <property type="match status" value="1"/>
</dbReference>
<dbReference type="Pfam" id="PF03542">
    <property type="entry name" value="Tuberin"/>
    <property type="match status" value="1"/>
</dbReference>
<dbReference type="PRINTS" id="PR01431">
    <property type="entry name" value="TUBERIN"/>
</dbReference>
<dbReference type="SUPFAM" id="SSF48371">
    <property type="entry name" value="ARM repeat"/>
    <property type="match status" value="1"/>
</dbReference>
<dbReference type="SUPFAM" id="SSF111347">
    <property type="entry name" value="Rap/Ran-GAP"/>
    <property type="match status" value="1"/>
</dbReference>
<dbReference type="PROSITE" id="PS50085">
    <property type="entry name" value="RAPGAP"/>
    <property type="match status" value="1"/>
</dbReference>
<sequence length="1814" mass="202071">MAKPTSKDSGLKEKFKILLGLGTSRPNPRCAEGKQTEFIITSEILRELSGECGLNNRIRMIGQICDVAKTKKLEEHAVEALWKAVSDLLQPERPPEARHAVLTLLKAIVQGQGDRLGVLRALFFKVIKDYPSNEDLHERLEVFKALTDNGRHITYLEEELAEFVLQWMDVGLSSEFLLVLVNLVKFNSCYLDEYIASMVHMICLLCIRTVSSVDIEVSLQVLDAVVCYNCLPAESLPLFIITLCRTINVKELCEPCWKLMRNLLGTHLGHSAIYNMCRIMEDRSYMEDAPLLRGAVFFVGMALWGAHRLYSLKNSPTSVLPSFYEAMTCPNEVVSYEIVLSITRLIKKYRKELQAVTWDILLDIIERLLQQLQNLDSPELKTIVHDLLTTVEELCDQNEFHGSQERYYELVESYADQRPESSLLNLISYRAQSIHPAKDGWIQNLQLLMERFFRNECRSAVAIKVLDVLSFVLLIIRQFYEEELINSVVISQLSHIPEDKDHQVRKLATQLLVDLAEGCHTHHFNSLLDIIEKVMARSLSPPPELEERDLAVHSASLEDVKTAVLGLLVILQTKLYTLPASHATRVYESLISHIQLHYKHGYSLPIASSIRLQAFDFLLLLRADSLHRLGLPNKDGVVRFSPYCLCDCMELDRASEKKASGPLSPPTGPPSPVPMGPAVRLGYLPYSLLFRVLLQCLKQESDWKVLKLVLSRLPESLRYKVLIFTSPCSVDQLSSALCSMLSAPKTLERLRGTPEGFSRTDLHLAVVPVLTALISYHNYLDKTRQREMVYCLEQGLIYRCASQCVVALAICSVEMPDIIIKALPVLVVKLTHISATASMAIPLLEFLSTLARLPHLYRNFVPEQYASVFAISLPYTNPSKFNQYIVCLAHHVIAMWFIRCRLPFRKDFVPYITKGLRSNVLLSFDDTPEKDSFRARSTSLNERPKSLRIARAPKQGLNNSPPVKEFKESCAAEAFRCRSISVSEHVVRSRIQTSLTSASLGSADENSMAQADDNLKNLHLELTETCLDMMARYVFSNFTAVPKRSPVGEFLLAGGRTKTWLVGNKLVTVTTSVGTGTRSLLGLDSGDLQGGSDSSSDPSTHVRQTKEAPAKLESQAGQQVSRGARDRVRSMSGGHGLRVGVLDTSAPYSPGGSASLGPQTAVAAKPEKPPAGAQLPTAEKTNLAAYVPLLTQGWAEILVRRPTGNTSWLMSLENPLSPFSSDINNMPLQELSNALMAAERFKEHGHAPVQVIVSATGCTAKPPTLPRSNTVASFSSLYQPSCQGQLHRSVSWADSAMVLEEGSPGETQVPVEPPELEDFEAALGTDRHCQRPDTYSRSSSASSQEEKSHLEELAAGGIPIERAISSEGARPAVDLSFQPSQPLSKSSSSPELQTLQDILGDLGDKIDIGRLSPEAKVRSQSGILDGEAATWSATGEESRITVPPEGPLPSSSPRSPSGLRPRGYTISDSAPSRRGKRVERDNFKSRAAASSAEKVPGINPSFVFLQLYHSPFFGDESNKPILLPNESFERSVQLLDQIPSYDTHKIAVLYVGEGQSSSELAILSNEHGSYRYTEFLTGLGRLIELKDCQPDKVYLGGLDVCGEDGQFTYCWHDDIMQAVFHIATLMPTKDVDKHRCDKKRHLGNDFVSIIYNDSGEDFKLGTIKQGQFNFVHVIITPLDYKCNLLTLQCRKDGPACKCEWWRQPGEIVVWALPVVMELTVTILLCHLQMASQVHHSRSNPTDIYPSKWIARLRHIKRLRQRIREEVHYSNPSLPLMHPPAHTKAPAQAPEATPTYETGQRKRLISSVDDFTEFV</sequence>
<organism>
    <name type="scientific">Mus musculus</name>
    <name type="common">Mouse</name>
    <dbReference type="NCBI Taxonomy" id="10090"/>
    <lineage>
        <taxon>Eukaryota</taxon>
        <taxon>Metazoa</taxon>
        <taxon>Chordata</taxon>
        <taxon>Craniata</taxon>
        <taxon>Vertebrata</taxon>
        <taxon>Euteleostomi</taxon>
        <taxon>Mammalia</taxon>
        <taxon>Eutheria</taxon>
        <taxon>Euarchontoglires</taxon>
        <taxon>Glires</taxon>
        <taxon>Rodentia</taxon>
        <taxon>Myomorpha</taxon>
        <taxon>Muroidea</taxon>
        <taxon>Muridae</taxon>
        <taxon>Murinae</taxon>
        <taxon>Mus</taxon>
        <taxon>Mus</taxon>
    </lineage>
</organism>
<accession>Q61037</accession>
<accession>P97723</accession>
<accession>P97724</accession>
<accession>P97725</accession>
<accession>P97727</accession>
<accession>Q61007</accession>
<accession>Q61008</accession>
<accession>Q9WUF6</accession>
<comment type="function">
    <text evidence="2 5 6 7">Catalytic component of the TSC-TBC complex, a multiprotein complex that acts as a negative regulator of the canonical mTORC1 complex, an evolutionarily conserved central nutrient sensor that stimulates anabolic reactions and macromolecule biosynthesis to promote cellular biomass generation and growth (PubMed:12820960, PubMed:24529379). Within the TSC-TBC complex, TSC2 acts as a GTPase-activating protein (GAP) for the small GTPase RHEB, a direct activator of the protein kinase activity of mTORC1 (PubMed:12820960, PubMed:24529379). In absence of nutrients, the TSC-TBC complex inhibits mTORC1, thereby preventing phosphorylation of ribosomal protein S6 kinase (RPS6KB1 and RPS6KB2) and EIF4EBP1 (4E-BP1) by the mTORC1 signaling (PubMed:12820960, PubMed:24529379). The TSC-TBC complex is inactivated in response to nutrients, relieving inhibition of mTORC1 (PubMed:24529379). Involved in microtubule-mediated protein transport via its ability to regulate mTORC1 signaling (PubMed:16707451). Also stimulates the intrinsic GTPase activity of the Ras-related proteins RAP1A and RAB5 (By similarity).</text>
</comment>
<comment type="subunit">
    <text evidence="1">Component of the TSC-TBC complex (also named Rhebulator complex), composed of 2 molecules of TSC1, 2 molecules of TSC2 and 1 molecule of TBC1D7 (By similarity). Probably forms a complex composed of chaperones HSP90 and HSP70, co-chaperones STIP1/HOP, CDC37, PPP5C, PTGES3/p23, TSC1 and client protein TSC2 (By similarity). Probably forms a complex composed of chaperones HSP90 and HSP70, co-chaperones CDC37, PPP5C, TSC1 and client protein TSC2, CDK4, AKT, RAF1 and NR3C1; this complex does not contain co-chaperones STIP1/HOP and PTGES3/p23 (By similarity). Forms a complex containing HSP90AA1, TSC1 and TSC2; TSC1 is required to recruit TCS2 to the complex thereby stabilizing TSC2 (By similarity). Interacts with TSC1 and HERC1; the interaction with TSC1 stabilizes TSC2 and prevents the interaction with HERC1 (By similarity). May also interact with the adapter molecule RABEP1 (By similarity). The final complex may contain TSC2 and RABEP1 linked to RAB5 (By similarity). Interacts with HSPA1 and HSPA8 (By similarity). Interacts with NAA10 (via C-terminal domain) (By similarity). Interacts with RRAGA (polyubiquitinated) (By similarity). Interacts with WDR45B (By similarity). Interacts with RPAP3 and URI1. Interacts with YWHAG (By similarity). Interacts with RHEB (By similarity).</text>
</comment>
<comment type="interaction">
    <interactant intactId="EBI-7924402">
        <id>Q61037</id>
    </interactant>
    <interactant intactId="EBI-1202690">
        <id>Q9EP53</id>
        <label>Tsc1</label>
    </interactant>
    <organismsDiffer>false</organismsDiffer>
    <experiments>6</experiments>
</comment>
<comment type="subcellular location">
    <subcellularLocation>
        <location evidence="7">Lysosome membrane</location>
        <topology evidence="7">Peripheral membrane protein</topology>
    </subcellularLocation>
    <subcellularLocation>
        <location evidence="7">Cytoplasm</location>
        <location evidence="7">Cytosol</location>
    </subcellularLocation>
    <text evidence="7">Recruited to lysosomal membranes in a RHEB-dependent process in absence of nutrients. In response to insulin signaling and phosphorylation by PKB/AKT1, the complex dissociates from lysosomal membranes and relocalizes to the cytosol.</text>
</comment>
<comment type="alternative products">
    <event type="alternative splicing"/>
    <isoform>
        <id>Q61037-1</id>
        <name>G</name>
        <sequence type="displayed"/>
    </isoform>
    <isoform>
        <id>Q61037-2</id>
        <name>A</name>
        <sequence type="described" ref="VSP_004473"/>
    </isoform>
    <isoform>
        <id>Q61037-3</id>
        <name>B</name>
        <sequence type="described" ref="VSP_004474"/>
    </isoform>
    <isoform>
        <id>Q61037-4</id>
        <name>C</name>
        <sequence type="described" ref="VSP_004476"/>
    </isoform>
    <isoform>
        <id>Q61037-5</id>
        <name>D</name>
        <sequence type="described" ref="VSP_004478"/>
    </isoform>
    <isoform>
        <id>Q61037-6</id>
        <name>E</name>
        <sequence type="described" ref="VSP_004477 VSP_004478 VSP_004479"/>
    </isoform>
    <isoform>
        <id>Q61037-7</id>
        <name>F</name>
        <sequence type="described" ref="VSP_004475 VSP_004477 VSP_004478 VSP_004479 VSP_004480"/>
    </isoform>
</comment>
<comment type="tissue specificity">
    <text evidence="8">Widely expressed.</text>
</comment>
<comment type="PTM">
    <text evidence="1 7">Phosphorylation at Ser-939 and Thr-1465 by PKB/AKT1 in response to insulin signaling and growth factor stimulation inhibits the ability of the TSC-TBC complex to suppress mTORC1 signaling: phosphorylation promotes dissociation of the TSC-TBC complex from lysosomal membranes, leading to activation of mTORC1 by RHEB (PubMed:24529379). Phosphorylation at Ser-1388, Ser-1419 or Ser-1421 does not affect interaction with TSC1 (By similarity). Phosphorylation by AMPK activates it and leads to negative regulation of the mTORC1 complex (By similarity). Phosphorylated at Ser-1805 by RPS6KA1; phosphorylation inhibits TSC2 ability to suppress mTORC1 signaling. Phosphorylated by DAPK1 (By similarity).</text>
</comment>
<comment type="PTM">
    <text evidence="1">Ubiquitinated by the DCX(FBXW5) E3 ubiquitin-protein ligase complex, leading to its subsequent degradation. Ubiquitinated by MYCBP2 independently of its phosphorylation status leading to subsequent degradation; association with TSC1 protects from ubiquitination.</text>
</comment>
<reference key="1">
    <citation type="journal article" date="1995" name="Cell. Mol. Biol. Res.">
        <title>Cloning, developmental expression, and evidence for alternative splicing of the murine tuberous sclerosis (TSC2) gene product.</title>
        <authorList>
            <person name="Kim K.K."/>
            <person name="Pajak L."/>
            <person name="Wang H."/>
            <person name="Field L.J."/>
        </authorList>
    </citation>
    <scope>NUCLEOTIDE SEQUENCE (ISOFORMS A; B; C; D; E; F AND G)</scope>
    <source>
        <tissue>Heart</tissue>
    </source>
</reference>
<reference key="2">
    <citation type="journal article" date="1996" name="Mamm. Genome">
        <title>Expression and differential splicing of the mouse TSC2 homolog.</title>
        <authorList>
            <person name="Olsson P.G."/>
            <person name="Schofield J.N."/>
            <person name="Edwards Y.H."/>
            <person name="Frischauf A.M."/>
        </authorList>
    </citation>
    <scope>NUCLEOTIDE SEQUENCE [MRNA]</scope>
    <scope>ALTERNATIVE SPLICING</scope>
    <scope>TISSUE SPECIFICITY</scope>
</reference>
<reference key="3">
    <citation type="journal article" date="1998" name="J. Mol. Biol.">
        <title>Cloning and characterization of a mouse homologue (mNthl1) of Escherichia coli endonuclease III.</title>
        <authorList>
            <person name="Sarker A.H."/>
            <person name="Ikeda S."/>
            <person name="Nakano H."/>
            <person name="Terato H."/>
            <person name="Ide H."/>
            <person name="Imai K."/>
            <person name="Akiyama K."/>
            <person name="Tsutsui K."/>
            <person name="Bo Z."/>
            <person name="Kubo K."/>
            <person name="Yamamoto K."/>
            <person name="Yasui A."/>
            <person name="Yoshida M.C."/>
            <person name="Seki S."/>
        </authorList>
    </citation>
    <scope>NUCLEOTIDE SEQUENCE OF 1-199</scope>
    <source>
        <strain>BALB/cJ</strain>
        <tissue>Leukocyte</tissue>
    </source>
</reference>
<reference key="4">
    <citation type="journal article" date="1999" name="Genet. Res.">
        <title>Genetic variants of the tuberous sclerosis 2 tumour suppressor gene in mouse t haplotypes.</title>
        <authorList>
            <person name="Kleymenova E.V."/>
            <person name="Declue J.E."/>
            <person name="Walker C.L."/>
        </authorList>
    </citation>
    <scope>NUCLEOTIDE SEQUENCE [MRNA] OF 119-1805</scope>
</reference>
<reference key="5">
    <citation type="journal article" date="2003" name="Mol. Cell">
        <title>Insulin activation of Rheb, a mediator of mTOR/S6K/4E-BP signaling, is inhibited by TSC1 and 2.</title>
        <authorList>
            <person name="Garami A."/>
            <person name="Zwartkruis F.J."/>
            <person name="Nobukuni T."/>
            <person name="Joaquin M."/>
            <person name="Roccio M."/>
            <person name="Stocker H."/>
            <person name="Kozma S.C."/>
            <person name="Hafen E."/>
            <person name="Bos J.L."/>
            <person name="Thomas G."/>
        </authorList>
    </citation>
    <scope>FUNCTION</scope>
    <scope>INTERACTION WITH TSC1</scope>
</reference>
<reference key="6">
    <citation type="journal article" date="2006" name="Cancer Res.">
        <title>Regulation of microtubule-dependent protein transport by the TSC2/mammalian target of rapamycin pathway.</title>
        <authorList>
            <person name="Jiang X."/>
            <person name="Yeung R.S."/>
        </authorList>
    </citation>
    <scope>FUNCTION</scope>
</reference>
<reference key="7">
    <citation type="journal article" date="2007" name="Proc. Natl. Acad. Sci. U.S.A.">
        <title>Large-scale phosphorylation analysis of mouse liver.</title>
        <authorList>
            <person name="Villen J."/>
            <person name="Beausoleil S.A."/>
            <person name="Gerber S.A."/>
            <person name="Gygi S.P."/>
        </authorList>
    </citation>
    <scope>IDENTIFICATION BY MASS SPECTROMETRY [LARGE SCALE ANALYSIS]</scope>
    <source>
        <tissue>Liver</tissue>
    </source>
</reference>
<reference key="8">
    <citation type="journal article" date="2010" name="Cell">
        <title>A tissue-specific atlas of mouse protein phosphorylation and expression.</title>
        <authorList>
            <person name="Huttlin E.L."/>
            <person name="Jedrychowski M.P."/>
            <person name="Elias J.E."/>
            <person name="Goswami T."/>
            <person name="Rad R."/>
            <person name="Beausoleil S.A."/>
            <person name="Villen J."/>
            <person name="Haas W."/>
            <person name="Sowa M.E."/>
            <person name="Gygi S.P."/>
        </authorList>
    </citation>
    <scope>PHOSPHORYLATION [LARGE SCALE ANALYSIS] AT SER-1132 AND SER-1772</scope>
    <scope>IDENTIFICATION BY MASS SPECTROMETRY [LARGE SCALE ANALYSIS]</scope>
    <source>
        <tissue>Brain</tissue>
        <tissue>Brown adipose tissue</tissue>
        <tissue>Heart</tissue>
        <tissue>Kidney</tissue>
        <tissue>Liver</tissue>
        <tissue>Lung</tissue>
        <tissue>Pancreas</tissue>
        <tissue>Spleen</tissue>
        <tissue>Testis</tissue>
    </source>
</reference>
<reference key="9">
    <citation type="journal article" date="2014" name="Cell">
        <title>Spatial control of the TSC complex integrates insulin and nutrient regulation of mTORC1 at the lysosome.</title>
        <authorList>
            <person name="Menon S."/>
            <person name="Dibble C.C."/>
            <person name="Talbott G."/>
            <person name="Hoxhaj G."/>
            <person name="Valvezan A.J."/>
            <person name="Takahashi H."/>
            <person name="Cantley L.C."/>
            <person name="Manning B.D."/>
        </authorList>
    </citation>
    <scope>FUNCTION</scope>
    <scope>SUBCELLULAR LOCATION</scope>
    <scope>PHOSPHORYLATION AT SER-939; SER-981; SER-1130; SER-1132 AND THR-1465</scope>
    <scope>MUTAGENESIS OF SER-939; SER-981; 1130-SER--SER-1132 AND THR-1465</scope>
</reference>
<proteinExistence type="evidence at protein level"/>
<evidence type="ECO:0000250" key="1">
    <source>
        <dbReference type="UniProtKB" id="P49815"/>
    </source>
</evidence>
<evidence type="ECO:0000250" key="2">
    <source>
        <dbReference type="UniProtKB" id="P49816"/>
    </source>
</evidence>
<evidence type="ECO:0000255" key="3">
    <source>
        <dbReference type="PROSITE-ProRule" id="PRU00165"/>
    </source>
</evidence>
<evidence type="ECO:0000256" key="4">
    <source>
        <dbReference type="SAM" id="MobiDB-lite"/>
    </source>
</evidence>
<evidence type="ECO:0000269" key="5">
    <source>
    </source>
</evidence>
<evidence type="ECO:0000269" key="6">
    <source>
    </source>
</evidence>
<evidence type="ECO:0000269" key="7">
    <source>
    </source>
</evidence>
<evidence type="ECO:0000269" key="8">
    <source>
    </source>
</evidence>
<evidence type="ECO:0000303" key="9">
    <source>
    </source>
</evidence>
<evidence type="ECO:0000305" key="10"/>
<evidence type="ECO:0000312" key="11">
    <source>
        <dbReference type="MGI" id="MGI:102548"/>
    </source>
</evidence>
<evidence type="ECO:0007744" key="12">
    <source>
    </source>
</evidence>
<protein>
    <recommendedName>
        <fullName evidence="10">Tuberin</fullName>
    </recommendedName>
    <alternativeName>
        <fullName evidence="9">Tuberous sclerosis 2 protein homolog</fullName>
    </alternativeName>
</protein>